<protein>
    <recommendedName>
        <fullName evidence="1">Type III pantothenate kinase</fullName>
        <ecNumber evidence="1">2.7.1.33</ecNumber>
    </recommendedName>
    <alternativeName>
        <fullName evidence="1">PanK-III</fullName>
    </alternativeName>
    <alternativeName>
        <fullName evidence="1">Pantothenic acid kinase</fullName>
    </alternativeName>
</protein>
<dbReference type="EC" id="2.7.1.33" evidence="1"/>
<dbReference type="EMBL" id="CP001079">
    <property type="protein sequence ID" value="ACM49080.1"/>
    <property type="molecule type" value="Genomic_DNA"/>
</dbReference>
<dbReference type="RefSeq" id="WP_010267198.1">
    <property type="nucleotide sequence ID" value="NZ_AFMS01000142.1"/>
</dbReference>
<dbReference type="SMR" id="B9KHW8"/>
<dbReference type="STRING" id="320483.AMF_201"/>
<dbReference type="GeneID" id="7398318"/>
<dbReference type="KEGG" id="amf:AMF_201"/>
<dbReference type="PATRIC" id="fig|320483.3.peg.230"/>
<dbReference type="eggNOG" id="COG1521">
    <property type="taxonomic scope" value="Bacteria"/>
</dbReference>
<dbReference type="HOGENOM" id="CLU_066627_1_0_5"/>
<dbReference type="UniPathway" id="UPA00241">
    <property type="reaction ID" value="UER00352"/>
</dbReference>
<dbReference type="Proteomes" id="UP000007307">
    <property type="component" value="Chromosome"/>
</dbReference>
<dbReference type="GO" id="GO:0005737">
    <property type="term" value="C:cytoplasm"/>
    <property type="evidence" value="ECO:0007669"/>
    <property type="project" value="UniProtKB-SubCell"/>
</dbReference>
<dbReference type="GO" id="GO:0005524">
    <property type="term" value="F:ATP binding"/>
    <property type="evidence" value="ECO:0007669"/>
    <property type="project" value="UniProtKB-UniRule"/>
</dbReference>
<dbReference type="GO" id="GO:0046872">
    <property type="term" value="F:metal ion binding"/>
    <property type="evidence" value="ECO:0007669"/>
    <property type="project" value="UniProtKB-KW"/>
</dbReference>
<dbReference type="GO" id="GO:0004594">
    <property type="term" value="F:pantothenate kinase activity"/>
    <property type="evidence" value="ECO:0007669"/>
    <property type="project" value="UniProtKB-UniRule"/>
</dbReference>
<dbReference type="GO" id="GO:0015937">
    <property type="term" value="P:coenzyme A biosynthetic process"/>
    <property type="evidence" value="ECO:0007669"/>
    <property type="project" value="UniProtKB-UniRule"/>
</dbReference>
<dbReference type="CDD" id="cd24015">
    <property type="entry name" value="ASKHA_NBD_PanK-III"/>
    <property type="match status" value="1"/>
</dbReference>
<dbReference type="Gene3D" id="3.30.420.40">
    <property type="match status" value="2"/>
</dbReference>
<dbReference type="HAMAP" id="MF_01274">
    <property type="entry name" value="Pantothen_kinase_3"/>
    <property type="match status" value="1"/>
</dbReference>
<dbReference type="InterPro" id="IPR043129">
    <property type="entry name" value="ATPase_NBD"/>
</dbReference>
<dbReference type="InterPro" id="IPR004619">
    <property type="entry name" value="Type_III_PanK"/>
</dbReference>
<dbReference type="NCBIfam" id="TIGR00671">
    <property type="entry name" value="baf"/>
    <property type="match status" value="1"/>
</dbReference>
<dbReference type="NCBIfam" id="NF009848">
    <property type="entry name" value="PRK13318.1-6"/>
    <property type="match status" value="1"/>
</dbReference>
<dbReference type="PANTHER" id="PTHR34265">
    <property type="entry name" value="TYPE III PANTOTHENATE KINASE"/>
    <property type="match status" value="1"/>
</dbReference>
<dbReference type="PANTHER" id="PTHR34265:SF1">
    <property type="entry name" value="TYPE III PANTOTHENATE KINASE"/>
    <property type="match status" value="1"/>
</dbReference>
<dbReference type="Pfam" id="PF03309">
    <property type="entry name" value="Pan_kinase"/>
    <property type="match status" value="1"/>
</dbReference>
<dbReference type="SUPFAM" id="SSF53067">
    <property type="entry name" value="Actin-like ATPase domain"/>
    <property type="match status" value="2"/>
</dbReference>
<evidence type="ECO:0000255" key="1">
    <source>
        <dbReference type="HAMAP-Rule" id="MF_01274"/>
    </source>
</evidence>
<proteinExistence type="inferred from homology"/>
<name>COAX_ANAMF</name>
<gene>
    <name evidence="1" type="primary">coaX</name>
    <name type="ordered locus">AMF_201</name>
</gene>
<reference key="1">
    <citation type="journal article" date="2009" name="BMC Genomics">
        <title>Conservation in the face of diversity: multistrain analysis of an intracellular bacterium.</title>
        <authorList>
            <person name="Dark M.J."/>
            <person name="Herndon D.R."/>
            <person name="Kappmeyer L.S."/>
            <person name="Gonzales M.P."/>
            <person name="Nordeen E."/>
            <person name="Palmer G.H."/>
            <person name="Knowles D.P. Jr."/>
            <person name="Brayton K.A."/>
        </authorList>
    </citation>
    <scope>NUCLEOTIDE SEQUENCE [LARGE SCALE GENOMIC DNA]</scope>
    <source>
        <strain>Florida</strain>
    </source>
</reference>
<organism>
    <name type="scientific">Anaplasma marginale (strain Florida)</name>
    <dbReference type="NCBI Taxonomy" id="320483"/>
    <lineage>
        <taxon>Bacteria</taxon>
        <taxon>Pseudomonadati</taxon>
        <taxon>Pseudomonadota</taxon>
        <taxon>Alphaproteobacteria</taxon>
        <taxon>Rickettsiales</taxon>
        <taxon>Anaplasmataceae</taxon>
        <taxon>Anaplasma</taxon>
    </lineage>
</organism>
<sequence>MIVAVDVGNTSTKIALCENGTVVDKWRISTCGKRTAAEYFSCISVLASRRSADILAGVRGAAISSVVPVVNRHVEELFERFFNISPVFITNSHADLFGLKICLAQPTIGADRVADLVAAKTVWPTSDLLVIDMGTATVFNLLDRNGGLYGQVVAPGVSCLVHSMRECTALLPQTLARESEKIVCDSTAASLEAGLYWGYRAMVEGITKQIMRESTRTLRVIATGGGVGLFRNCDYLNHIDELLTIKGIVQIYEKTQG</sequence>
<feature type="chain" id="PRO_1000165184" description="Type III pantothenate kinase">
    <location>
        <begin position="1"/>
        <end position="257"/>
    </location>
</feature>
<feature type="active site" description="Proton acceptor" evidence="1">
    <location>
        <position position="111"/>
    </location>
</feature>
<feature type="binding site" evidence="1">
    <location>
        <begin position="6"/>
        <end position="13"/>
    </location>
    <ligand>
        <name>ATP</name>
        <dbReference type="ChEBI" id="CHEBI:30616"/>
    </ligand>
</feature>
<feature type="binding site" evidence="1">
    <location>
        <begin position="109"/>
        <end position="112"/>
    </location>
    <ligand>
        <name>substrate</name>
    </ligand>
</feature>
<feature type="binding site" evidence="1">
    <location>
        <position position="132"/>
    </location>
    <ligand>
        <name>K(+)</name>
        <dbReference type="ChEBI" id="CHEBI:29103"/>
    </ligand>
</feature>
<feature type="binding site" evidence="1">
    <location>
        <position position="135"/>
    </location>
    <ligand>
        <name>ATP</name>
        <dbReference type="ChEBI" id="CHEBI:30616"/>
    </ligand>
</feature>
<feature type="binding site" evidence="1">
    <location>
        <position position="187"/>
    </location>
    <ligand>
        <name>substrate</name>
    </ligand>
</feature>
<keyword id="KW-0067">ATP-binding</keyword>
<keyword id="KW-0173">Coenzyme A biosynthesis</keyword>
<keyword id="KW-0963">Cytoplasm</keyword>
<keyword id="KW-0418">Kinase</keyword>
<keyword id="KW-0479">Metal-binding</keyword>
<keyword id="KW-0547">Nucleotide-binding</keyword>
<keyword id="KW-0630">Potassium</keyword>
<keyword id="KW-1185">Reference proteome</keyword>
<keyword id="KW-0808">Transferase</keyword>
<accession>B9KHW8</accession>
<comment type="function">
    <text evidence="1">Catalyzes the phosphorylation of pantothenate (Pan), the first step in CoA biosynthesis.</text>
</comment>
<comment type="catalytic activity">
    <reaction evidence="1">
        <text>(R)-pantothenate + ATP = (R)-4'-phosphopantothenate + ADP + H(+)</text>
        <dbReference type="Rhea" id="RHEA:16373"/>
        <dbReference type="ChEBI" id="CHEBI:10986"/>
        <dbReference type="ChEBI" id="CHEBI:15378"/>
        <dbReference type="ChEBI" id="CHEBI:29032"/>
        <dbReference type="ChEBI" id="CHEBI:30616"/>
        <dbReference type="ChEBI" id="CHEBI:456216"/>
        <dbReference type="EC" id="2.7.1.33"/>
    </reaction>
</comment>
<comment type="cofactor">
    <cofactor evidence="1">
        <name>NH4(+)</name>
        <dbReference type="ChEBI" id="CHEBI:28938"/>
    </cofactor>
    <cofactor evidence="1">
        <name>K(+)</name>
        <dbReference type="ChEBI" id="CHEBI:29103"/>
    </cofactor>
    <text evidence="1">A monovalent cation. Ammonium or potassium.</text>
</comment>
<comment type="pathway">
    <text evidence="1">Cofactor biosynthesis; coenzyme A biosynthesis; CoA from (R)-pantothenate: step 1/5.</text>
</comment>
<comment type="subunit">
    <text evidence="1">Homodimer.</text>
</comment>
<comment type="subcellular location">
    <subcellularLocation>
        <location evidence="1">Cytoplasm</location>
    </subcellularLocation>
</comment>
<comment type="similarity">
    <text evidence="1">Belongs to the type III pantothenate kinase family.</text>
</comment>